<keyword id="KW-0694">RNA-binding</keyword>
<keyword id="KW-0346">Stress response</keyword>
<evidence type="ECO:0000255" key="1">
    <source>
        <dbReference type="HAMAP-Rule" id="MF_00436"/>
    </source>
</evidence>
<evidence type="ECO:0000255" key="2">
    <source>
        <dbReference type="PROSITE-ProRule" id="PRU01346"/>
    </source>
</evidence>
<sequence length="82" mass="9197">MAADRAQNLQDTFLNHVRKTKTPLTIFLVNGVKLQGIVTWFDNFCLLLRRDGHSQLVYKHAISTIMPGAPIQLFESGEDSPA</sequence>
<dbReference type="EMBL" id="CP001096">
    <property type="protein sequence ID" value="ACF01375.1"/>
    <property type="molecule type" value="Genomic_DNA"/>
</dbReference>
<dbReference type="RefSeq" id="WP_011158147.1">
    <property type="nucleotide sequence ID" value="NC_011004.1"/>
</dbReference>
<dbReference type="SMR" id="B3QIM2"/>
<dbReference type="GeneID" id="66893666"/>
<dbReference type="KEGG" id="rpt:Rpal_2867"/>
<dbReference type="HOGENOM" id="CLU_113688_0_0_5"/>
<dbReference type="OrthoDB" id="9799751at2"/>
<dbReference type="Proteomes" id="UP000001725">
    <property type="component" value="Chromosome"/>
</dbReference>
<dbReference type="GO" id="GO:0005829">
    <property type="term" value="C:cytosol"/>
    <property type="evidence" value="ECO:0007669"/>
    <property type="project" value="TreeGrafter"/>
</dbReference>
<dbReference type="GO" id="GO:0003723">
    <property type="term" value="F:RNA binding"/>
    <property type="evidence" value="ECO:0007669"/>
    <property type="project" value="UniProtKB-UniRule"/>
</dbReference>
<dbReference type="GO" id="GO:0006355">
    <property type="term" value="P:regulation of DNA-templated transcription"/>
    <property type="evidence" value="ECO:0007669"/>
    <property type="project" value="InterPro"/>
</dbReference>
<dbReference type="GO" id="GO:0043487">
    <property type="term" value="P:regulation of RNA stability"/>
    <property type="evidence" value="ECO:0007669"/>
    <property type="project" value="TreeGrafter"/>
</dbReference>
<dbReference type="GO" id="GO:0045974">
    <property type="term" value="P:regulation of translation, ncRNA-mediated"/>
    <property type="evidence" value="ECO:0007669"/>
    <property type="project" value="TreeGrafter"/>
</dbReference>
<dbReference type="CDD" id="cd01716">
    <property type="entry name" value="Hfq"/>
    <property type="match status" value="1"/>
</dbReference>
<dbReference type="FunFam" id="2.30.30.100:FF:000001">
    <property type="entry name" value="RNA-binding protein Hfq"/>
    <property type="match status" value="1"/>
</dbReference>
<dbReference type="Gene3D" id="2.30.30.100">
    <property type="match status" value="1"/>
</dbReference>
<dbReference type="HAMAP" id="MF_00436">
    <property type="entry name" value="Hfq"/>
    <property type="match status" value="1"/>
</dbReference>
<dbReference type="InterPro" id="IPR005001">
    <property type="entry name" value="Hfq"/>
</dbReference>
<dbReference type="InterPro" id="IPR010920">
    <property type="entry name" value="LSM_dom_sf"/>
</dbReference>
<dbReference type="InterPro" id="IPR047575">
    <property type="entry name" value="Sm"/>
</dbReference>
<dbReference type="NCBIfam" id="TIGR02383">
    <property type="entry name" value="Hfq"/>
    <property type="match status" value="1"/>
</dbReference>
<dbReference type="NCBIfam" id="NF001602">
    <property type="entry name" value="PRK00395.1"/>
    <property type="match status" value="1"/>
</dbReference>
<dbReference type="PANTHER" id="PTHR34772">
    <property type="entry name" value="RNA-BINDING PROTEIN HFQ"/>
    <property type="match status" value="1"/>
</dbReference>
<dbReference type="PANTHER" id="PTHR34772:SF1">
    <property type="entry name" value="RNA-BINDING PROTEIN HFQ"/>
    <property type="match status" value="1"/>
</dbReference>
<dbReference type="Pfam" id="PF17209">
    <property type="entry name" value="Hfq"/>
    <property type="match status" value="1"/>
</dbReference>
<dbReference type="SUPFAM" id="SSF50182">
    <property type="entry name" value="Sm-like ribonucleoproteins"/>
    <property type="match status" value="1"/>
</dbReference>
<dbReference type="PROSITE" id="PS52002">
    <property type="entry name" value="SM"/>
    <property type="match status" value="1"/>
</dbReference>
<organism>
    <name type="scientific">Rhodopseudomonas palustris (strain TIE-1)</name>
    <dbReference type="NCBI Taxonomy" id="395960"/>
    <lineage>
        <taxon>Bacteria</taxon>
        <taxon>Pseudomonadati</taxon>
        <taxon>Pseudomonadota</taxon>
        <taxon>Alphaproteobacteria</taxon>
        <taxon>Hyphomicrobiales</taxon>
        <taxon>Nitrobacteraceae</taxon>
        <taxon>Rhodopseudomonas</taxon>
    </lineage>
</organism>
<comment type="function">
    <text evidence="1">RNA chaperone that binds small regulatory RNA (sRNAs) and mRNAs to facilitate mRNA translational regulation in response to envelope stress, environmental stress and changes in metabolite concentrations. Also binds with high specificity to tRNAs.</text>
</comment>
<comment type="subunit">
    <text evidence="1">Homohexamer.</text>
</comment>
<comment type="similarity">
    <text evidence="1">Belongs to the Hfq family.</text>
</comment>
<proteinExistence type="inferred from homology"/>
<gene>
    <name evidence="1" type="primary">hfq</name>
    <name type="ordered locus">Rpal_2867</name>
</gene>
<reference key="1">
    <citation type="submission" date="2008-05" db="EMBL/GenBank/DDBJ databases">
        <title>Complete sequence of Rhodopseudomonas palustris TIE-1.</title>
        <authorList>
            <consortium name="US DOE Joint Genome Institute"/>
            <person name="Lucas S."/>
            <person name="Copeland A."/>
            <person name="Lapidus A."/>
            <person name="Glavina del Rio T."/>
            <person name="Dalin E."/>
            <person name="Tice H."/>
            <person name="Pitluck S."/>
            <person name="Chain P."/>
            <person name="Malfatti S."/>
            <person name="Shin M."/>
            <person name="Vergez L."/>
            <person name="Lang D."/>
            <person name="Schmutz J."/>
            <person name="Larimer F."/>
            <person name="Land M."/>
            <person name="Hauser L."/>
            <person name="Kyrpides N."/>
            <person name="Mikhailova N."/>
            <person name="Emerson D."/>
            <person name="Newman D.K."/>
            <person name="Roden E."/>
            <person name="Richardson P."/>
        </authorList>
    </citation>
    <scope>NUCLEOTIDE SEQUENCE [LARGE SCALE GENOMIC DNA]</scope>
    <source>
        <strain>TIE-1</strain>
    </source>
</reference>
<name>HFQ_RHOPT</name>
<feature type="chain" id="PRO_1000190350" description="RNA-binding protein Hfq">
    <location>
        <begin position="1"/>
        <end position="82"/>
    </location>
</feature>
<feature type="domain" description="Sm" evidence="2">
    <location>
        <begin position="11"/>
        <end position="71"/>
    </location>
</feature>
<protein>
    <recommendedName>
        <fullName evidence="1">RNA-binding protein Hfq</fullName>
    </recommendedName>
</protein>
<accession>B3QIM2</accession>